<sequence>MEKRTNYCGELNETHIDQHVVLHGWVQKRRDLGGLIFIDLRDREGIVQVVFNPEFSKEALEIADSVRNEFVVTIKGKVHARGEKAINEKLATGKVEILAEEITILNTSKTPPFYIEDGVNVSDELRLKYRYLDLRRPEMNNIFKMRHTVTRTFRNKLDALGFFDIETPYLTKSTPEGARDYLVPSRVYPGNFYALPQSPQILKQLLMTAGFDKYYQIVRCFRDEDLRGDRQPEFTQIDLETSFLTKEKIQAITEDMLIDVVKEAKGITIEKPFPRMTYKEAMDRFGSDKPDIRFGLELQNVSEVVKDVDFKVFQSAIENGGEVKAINAKAAAANFSRKDLDALGIFVSNYGAKGLAWLKVEAGELKGPIAKFFPEEKALELKAALKAEDGDLLLFAADKADIVAASLGALRNKLGKDLNLINEDELAFLWVTDWPLFEYDEEAGRYVSAHHPFTLPKEEDIPLLETDSSKVMAEAYDIVLNGYEIGGGSLRIYKKEVQESMFRALGFTDESAKEQFGFLMDALEYGTPPHGGIALGLDRIVMILAGRNNLRDTIAFPKTGSAVDPLTNAPGEVSDAQLDELKLQITKKELN</sequence>
<protein>
    <recommendedName>
        <fullName evidence="1">Aspartate--tRNA ligase</fullName>
        <ecNumber evidence="1">6.1.1.12</ecNumber>
    </recommendedName>
    <alternativeName>
        <fullName evidence="1">Aspartyl-tRNA synthetase</fullName>
        <shortName evidence="1">AspRS</shortName>
    </alternativeName>
</protein>
<organism>
    <name type="scientific">Listeria welshimeri serovar 6b (strain ATCC 35897 / DSM 20650 / CCUG 15529 / CIP 8149 / NCTC 11857 / SLCC 5334 / V8)</name>
    <dbReference type="NCBI Taxonomy" id="386043"/>
    <lineage>
        <taxon>Bacteria</taxon>
        <taxon>Bacillati</taxon>
        <taxon>Bacillota</taxon>
        <taxon>Bacilli</taxon>
        <taxon>Bacillales</taxon>
        <taxon>Listeriaceae</taxon>
        <taxon>Listeria</taxon>
    </lineage>
</organism>
<proteinExistence type="inferred from homology"/>
<gene>
    <name evidence="1" type="primary">aspS</name>
    <name type="ordered locus">lwe1532</name>
</gene>
<keyword id="KW-0030">Aminoacyl-tRNA synthetase</keyword>
<keyword id="KW-0067">ATP-binding</keyword>
<keyword id="KW-0963">Cytoplasm</keyword>
<keyword id="KW-0436">Ligase</keyword>
<keyword id="KW-0547">Nucleotide-binding</keyword>
<keyword id="KW-0648">Protein biosynthesis</keyword>
<comment type="function">
    <text evidence="1">Catalyzes the attachment of L-aspartate to tRNA(Asp) in a two-step reaction: L-aspartate is first activated by ATP to form Asp-AMP and then transferred to the acceptor end of tRNA(Asp).</text>
</comment>
<comment type="catalytic activity">
    <reaction evidence="1">
        <text>tRNA(Asp) + L-aspartate + ATP = L-aspartyl-tRNA(Asp) + AMP + diphosphate</text>
        <dbReference type="Rhea" id="RHEA:19649"/>
        <dbReference type="Rhea" id="RHEA-COMP:9660"/>
        <dbReference type="Rhea" id="RHEA-COMP:9678"/>
        <dbReference type="ChEBI" id="CHEBI:29991"/>
        <dbReference type="ChEBI" id="CHEBI:30616"/>
        <dbReference type="ChEBI" id="CHEBI:33019"/>
        <dbReference type="ChEBI" id="CHEBI:78442"/>
        <dbReference type="ChEBI" id="CHEBI:78516"/>
        <dbReference type="ChEBI" id="CHEBI:456215"/>
        <dbReference type="EC" id="6.1.1.12"/>
    </reaction>
</comment>
<comment type="subunit">
    <text evidence="1">Homodimer.</text>
</comment>
<comment type="subcellular location">
    <subcellularLocation>
        <location evidence="1">Cytoplasm</location>
    </subcellularLocation>
</comment>
<comment type="similarity">
    <text evidence="1">Belongs to the class-II aminoacyl-tRNA synthetase family. Type 1 subfamily.</text>
</comment>
<evidence type="ECO:0000255" key="1">
    <source>
        <dbReference type="HAMAP-Rule" id="MF_00044"/>
    </source>
</evidence>
<feature type="chain" id="PRO_1000006696" description="Aspartate--tRNA ligase">
    <location>
        <begin position="1"/>
        <end position="591"/>
    </location>
</feature>
<feature type="region of interest" description="Aspartate" evidence="1">
    <location>
        <begin position="200"/>
        <end position="203"/>
    </location>
</feature>
<feature type="binding site" evidence="1">
    <location>
        <position position="176"/>
    </location>
    <ligand>
        <name>L-aspartate</name>
        <dbReference type="ChEBI" id="CHEBI:29991"/>
    </ligand>
</feature>
<feature type="binding site" evidence="1">
    <location>
        <begin position="222"/>
        <end position="224"/>
    </location>
    <ligand>
        <name>ATP</name>
        <dbReference type="ChEBI" id="CHEBI:30616"/>
    </ligand>
</feature>
<feature type="binding site" evidence="1">
    <location>
        <position position="222"/>
    </location>
    <ligand>
        <name>L-aspartate</name>
        <dbReference type="ChEBI" id="CHEBI:29991"/>
    </ligand>
</feature>
<feature type="binding site" evidence="1">
    <location>
        <position position="231"/>
    </location>
    <ligand>
        <name>ATP</name>
        <dbReference type="ChEBI" id="CHEBI:30616"/>
    </ligand>
</feature>
<feature type="binding site" evidence="1">
    <location>
        <position position="450"/>
    </location>
    <ligand>
        <name>L-aspartate</name>
        <dbReference type="ChEBI" id="CHEBI:29991"/>
    </ligand>
</feature>
<feature type="binding site" evidence="1">
    <location>
        <position position="484"/>
    </location>
    <ligand>
        <name>ATP</name>
        <dbReference type="ChEBI" id="CHEBI:30616"/>
    </ligand>
</feature>
<feature type="binding site" evidence="1">
    <location>
        <position position="491"/>
    </location>
    <ligand>
        <name>L-aspartate</name>
        <dbReference type="ChEBI" id="CHEBI:29991"/>
    </ligand>
</feature>
<feature type="binding site" evidence="1">
    <location>
        <begin position="536"/>
        <end position="539"/>
    </location>
    <ligand>
        <name>ATP</name>
        <dbReference type="ChEBI" id="CHEBI:30616"/>
    </ligand>
</feature>
<accession>A0AIW8</accession>
<name>SYD_LISW6</name>
<dbReference type="EC" id="6.1.1.12" evidence="1"/>
<dbReference type="EMBL" id="AM263198">
    <property type="protein sequence ID" value="CAK20950.1"/>
    <property type="molecule type" value="Genomic_DNA"/>
</dbReference>
<dbReference type="RefSeq" id="WP_011702322.1">
    <property type="nucleotide sequence ID" value="NC_008555.1"/>
</dbReference>
<dbReference type="SMR" id="A0AIW8"/>
<dbReference type="STRING" id="386043.lwe1532"/>
<dbReference type="GeneID" id="61189409"/>
<dbReference type="KEGG" id="lwe:lwe1532"/>
<dbReference type="eggNOG" id="COG0173">
    <property type="taxonomic scope" value="Bacteria"/>
</dbReference>
<dbReference type="HOGENOM" id="CLU_014330_3_2_9"/>
<dbReference type="OrthoDB" id="9802326at2"/>
<dbReference type="Proteomes" id="UP000000779">
    <property type="component" value="Chromosome"/>
</dbReference>
<dbReference type="GO" id="GO:0005737">
    <property type="term" value="C:cytoplasm"/>
    <property type="evidence" value="ECO:0007669"/>
    <property type="project" value="UniProtKB-SubCell"/>
</dbReference>
<dbReference type="GO" id="GO:0004815">
    <property type="term" value="F:aspartate-tRNA ligase activity"/>
    <property type="evidence" value="ECO:0007669"/>
    <property type="project" value="UniProtKB-UniRule"/>
</dbReference>
<dbReference type="GO" id="GO:0005524">
    <property type="term" value="F:ATP binding"/>
    <property type="evidence" value="ECO:0007669"/>
    <property type="project" value="UniProtKB-UniRule"/>
</dbReference>
<dbReference type="GO" id="GO:0140096">
    <property type="term" value="F:catalytic activity, acting on a protein"/>
    <property type="evidence" value="ECO:0007669"/>
    <property type="project" value="UniProtKB-ARBA"/>
</dbReference>
<dbReference type="GO" id="GO:0003676">
    <property type="term" value="F:nucleic acid binding"/>
    <property type="evidence" value="ECO:0007669"/>
    <property type="project" value="InterPro"/>
</dbReference>
<dbReference type="GO" id="GO:0016740">
    <property type="term" value="F:transferase activity"/>
    <property type="evidence" value="ECO:0007669"/>
    <property type="project" value="UniProtKB-ARBA"/>
</dbReference>
<dbReference type="GO" id="GO:0006422">
    <property type="term" value="P:aspartyl-tRNA aminoacylation"/>
    <property type="evidence" value="ECO:0007669"/>
    <property type="project" value="UniProtKB-UniRule"/>
</dbReference>
<dbReference type="CDD" id="cd00777">
    <property type="entry name" value="AspRS_core"/>
    <property type="match status" value="1"/>
</dbReference>
<dbReference type="CDD" id="cd04317">
    <property type="entry name" value="EcAspRS_like_N"/>
    <property type="match status" value="1"/>
</dbReference>
<dbReference type="Gene3D" id="3.30.930.10">
    <property type="entry name" value="Bira Bifunctional Protein, Domain 2"/>
    <property type="match status" value="1"/>
</dbReference>
<dbReference type="Gene3D" id="3.30.1360.30">
    <property type="entry name" value="GAD-like domain"/>
    <property type="match status" value="1"/>
</dbReference>
<dbReference type="Gene3D" id="2.40.50.140">
    <property type="entry name" value="Nucleic acid-binding proteins"/>
    <property type="match status" value="1"/>
</dbReference>
<dbReference type="HAMAP" id="MF_00044">
    <property type="entry name" value="Asp_tRNA_synth_type1"/>
    <property type="match status" value="1"/>
</dbReference>
<dbReference type="InterPro" id="IPR004364">
    <property type="entry name" value="Aa-tRNA-synt_II"/>
</dbReference>
<dbReference type="InterPro" id="IPR006195">
    <property type="entry name" value="aa-tRNA-synth_II"/>
</dbReference>
<dbReference type="InterPro" id="IPR045864">
    <property type="entry name" value="aa-tRNA-synth_II/BPL/LPL"/>
</dbReference>
<dbReference type="InterPro" id="IPR004524">
    <property type="entry name" value="Asp-tRNA-ligase_1"/>
</dbReference>
<dbReference type="InterPro" id="IPR047089">
    <property type="entry name" value="Asp-tRNA-ligase_1_N"/>
</dbReference>
<dbReference type="InterPro" id="IPR002312">
    <property type="entry name" value="Asp/Asn-tRNA-synth_IIb"/>
</dbReference>
<dbReference type="InterPro" id="IPR047090">
    <property type="entry name" value="AspRS_core"/>
</dbReference>
<dbReference type="InterPro" id="IPR004115">
    <property type="entry name" value="GAD-like_sf"/>
</dbReference>
<dbReference type="InterPro" id="IPR029351">
    <property type="entry name" value="GAD_dom"/>
</dbReference>
<dbReference type="InterPro" id="IPR012340">
    <property type="entry name" value="NA-bd_OB-fold"/>
</dbReference>
<dbReference type="InterPro" id="IPR004365">
    <property type="entry name" value="NA-bd_OB_tRNA"/>
</dbReference>
<dbReference type="NCBIfam" id="TIGR00459">
    <property type="entry name" value="aspS_bact"/>
    <property type="match status" value="1"/>
</dbReference>
<dbReference type="NCBIfam" id="NF001750">
    <property type="entry name" value="PRK00476.1"/>
    <property type="match status" value="1"/>
</dbReference>
<dbReference type="PANTHER" id="PTHR22594:SF5">
    <property type="entry name" value="ASPARTATE--TRNA LIGASE, MITOCHONDRIAL"/>
    <property type="match status" value="1"/>
</dbReference>
<dbReference type="PANTHER" id="PTHR22594">
    <property type="entry name" value="ASPARTYL/LYSYL-TRNA SYNTHETASE"/>
    <property type="match status" value="1"/>
</dbReference>
<dbReference type="Pfam" id="PF02938">
    <property type="entry name" value="GAD"/>
    <property type="match status" value="1"/>
</dbReference>
<dbReference type="Pfam" id="PF00152">
    <property type="entry name" value="tRNA-synt_2"/>
    <property type="match status" value="1"/>
</dbReference>
<dbReference type="Pfam" id="PF01336">
    <property type="entry name" value="tRNA_anti-codon"/>
    <property type="match status" value="1"/>
</dbReference>
<dbReference type="PRINTS" id="PR01042">
    <property type="entry name" value="TRNASYNTHASP"/>
</dbReference>
<dbReference type="SUPFAM" id="SSF55681">
    <property type="entry name" value="Class II aaRS and biotin synthetases"/>
    <property type="match status" value="1"/>
</dbReference>
<dbReference type="SUPFAM" id="SSF55261">
    <property type="entry name" value="GAD domain-like"/>
    <property type="match status" value="1"/>
</dbReference>
<dbReference type="SUPFAM" id="SSF50249">
    <property type="entry name" value="Nucleic acid-binding proteins"/>
    <property type="match status" value="1"/>
</dbReference>
<dbReference type="PROSITE" id="PS50862">
    <property type="entry name" value="AA_TRNA_LIGASE_II"/>
    <property type="match status" value="1"/>
</dbReference>
<reference key="1">
    <citation type="journal article" date="2006" name="J. Bacteriol.">
        <title>Whole-genome sequence of Listeria welshimeri reveals common steps in genome reduction with Listeria innocua as compared to Listeria monocytogenes.</title>
        <authorList>
            <person name="Hain T."/>
            <person name="Steinweg C."/>
            <person name="Kuenne C.T."/>
            <person name="Billion A."/>
            <person name="Ghai R."/>
            <person name="Chatterjee S.S."/>
            <person name="Domann E."/>
            <person name="Kaerst U."/>
            <person name="Goesmann A."/>
            <person name="Bekel T."/>
            <person name="Bartels D."/>
            <person name="Kaiser O."/>
            <person name="Meyer F."/>
            <person name="Puehler A."/>
            <person name="Weisshaar B."/>
            <person name="Wehland J."/>
            <person name="Liang C."/>
            <person name="Dandekar T."/>
            <person name="Lampidis R."/>
            <person name="Kreft J."/>
            <person name="Goebel W."/>
            <person name="Chakraborty T."/>
        </authorList>
    </citation>
    <scope>NUCLEOTIDE SEQUENCE [LARGE SCALE GENOMIC DNA]</scope>
    <source>
        <strain>ATCC 35897 / DSM 20650 / CCUG 15529 / CIP 8149 / NCTC 11857 / SLCC 5334 / V8</strain>
    </source>
</reference>